<feature type="chain" id="PRO_0000209068" description="Probable potassium transport system protein Kup">
    <location>
        <begin position="1"/>
        <end position="634"/>
    </location>
</feature>
<feature type="transmembrane region" description="Helical" evidence="1">
    <location>
        <begin position="21"/>
        <end position="41"/>
    </location>
</feature>
<feature type="transmembrane region" description="Helical" evidence="1">
    <location>
        <begin position="58"/>
        <end position="78"/>
    </location>
</feature>
<feature type="transmembrane region" description="Helical" evidence="1">
    <location>
        <begin position="110"/>
        <end position="130"/>
    </location>
</feature>
<feature type="transmembrane region" description="Helical" evidence="1">
    <location>
        <begin position="147"/>
        <end position="167"/>
    </location>
</feature>
<feature type="transmembrane region" description="Helical" evidence="1">
    <location>
        <begin position="179"/>
        <end position="199"/>
    </location>
</feature>
<feature type="transmembrane region" description="Helical" evidence="1">
    <location>
        <begin position="223"/>
        <end position="243"/>
    </location>
</feature>
<feature type="transmembrane region" description="Helical" evidence="1">
    <location>
        <begin position="258"/>
        <end position="278"/>
    </location>
</feature>
<feature type="transmembrane region" description="Helical" evidence="1">
    <location>
        <begin position="296"/>
        <end position="316"/>
    </location>
</feature>
<feature type="transmembrane region" description="Helical" evidence="1">
    <location>
        <begin position="348"/>
        <end position="368"/>
    </location>
</feature>
<feature type="transmembrane region" description="Helical" evidence="1">
    <location>
        <begin position="377"/>
        <end position="397"/>
    </location>
</feature>
<feature type="transmembrane region" description="Helical" evidence="1">
    <location>
        <begin position="403"/>
        <end position="423"/>
    </location>
</feature>
<feature type="transmembrane region" description="Helical" evidence="1">
    <location>
        <begin position="427"/>
        <end position="447"/>
    </location>
</feature>
<organism>
    <name type="scientific">Xanthomonas axonopodis pv. citri (strain 306)</name>
    <dbReference type="NCBI Taxonomy" id="190486"/>
    <lineage>
        <taxon>Bacteria</taxon>
        <taxon>Pseudomonadati</taxon>
        <taxon>Pseudomonadota</taxon>
        <taxon>Gammaproteobacteria</taxon>
        <taxon>Lysobacterales</taxon>
        <taxon>Lysobacteraceae</taxon>
        <taxon>Xanthomonas</taxon>
    </lineage>
</organism>
<keyword id="KW-0997">Cell inner membrane</keyword>
<keyword id="KW-1003">Cell membrane</keyword>
<keyword id="KW-0406">Ion transport</keyword>
<keyword id="KW-0472">Membrane</keyword>
<keyword id="KW-0630">Potassium</keyword>
<keyword id="KW-0633">Potassium transport</keyword>
<keyword id="KW-0769">Symport</keyword>
<keyword id="KW-0812">Transmembrane</keyword>
<keyword id="KW-1133">Transmembrane helix</keyword>
<keyword id="KW-0813">Transport</keyword>
<proteinExistence type="inferred from homology"/>
<dbReference type="EMBL" id="AE008923">
    <property type="protein sequence ID" value="AAM37992.1"/>
    <property type="molecule type" value="Genomic_DNA"/>
</dbReference>
<dbReference type="RefSeq" id="WP_011052062.1">
    <property type="nucleotide sequence ID" value="NC_003919.1"/>
</dbReference>
<dbReference type="KEGG" id="xac:XAC3148"/>
<dbReference type="eggNOG" id="COG3158">
    <property type="taxonomic scope" value="Bacteria"/>
</dbReference>
<dbReference type="HOGENOM" id="CLU_008142_4_2_6"/>
<dbReference type="Proteomes" id="UP000000576">
    <property type="component" value="Chromosome"/>
</dbReference>
<dbReference type="GO" id="GO:0005886">
    <property type="term" value="C:plasma membrane"/>
    <property type="evidence" value="ECO:0007669"/>
    <property type="project" value="UniProtKB-SubCell"/>
</dbReference>
<dbReference type="GO" id="GO:0015079">
    <property type="term" value="F:potassium ion transmembrane transporter activity"/>
    <property type="evidence" value="ECO:0007669"/>
    <property type="project" value="UniProtKB-UniRule"/>
</dbReference>
<dbReference type="GO" id="GO:0015293">
    <property type="term" value="F:symporter activity"/>
    <property type="evidence" value="ECO:0007669"/>
    <property type="project" value="UniProtKB-UniRule"/>
</dbReference>
<dbReference type="HAMAP" id="MF_01522">
    <property type="entry name" value="Kup"/>
    <property type="match status" value="1"/>
</dbReference>
<dbReference type="InterPro" id="IPR003855">
    <property type="entry name" value="K+_transporter"/>
</dbReference>
<dbReference type="InterPro" id="IPR053952">
    <property type="entry name" value="K_trans_C"/>
</dbReference>
<dbReference type="InterPro" id="IPR053951">
    <property type="entry name" value="K_trans_N"/>
</dbReference>
<dbReference type="InterPro" id="IPR023051">
    <property type="entry name" value="Kup"/>
</dbReference>
<dbReference type="PANTHER" id="PTHR30540:SF79">
    <property type="entry name" value="LOW AFFINITY POTASSIUM TRANSPORT SYSTEM PROTEIN KUP"/>
    <property type="match status" value="1"/>
</dbReference>
<dbReference type="PANTHER" id="PTHR30540">
    <property type="entry name" value="OSMOTIC STRESS POTASSIUM TRANSPORTER"/>
    <property type="match status" value="1"/>
</dbReference>
<dbReference type="Pfam" id="PF02705">
    <property type="entry name" value="K_trans"/>
    <property type="match status" value="1"/>
</dbReference>
<dbReference type="Pfam" id="PF22776">
    <property type="entry name" value="K_trans_C"/>
    <property type="match status" value="1"/>
</dbReference>
<name>KUP_XANAC</name>
<protein>
    <recommendedName>
        <fullName evidence="1">Probable potassium transport system protein Kup</fullName>
    </recommendedName>
</protein>
<reference key="1">
    <citation type="journal article" date="2002" name="Nature">
        <title>Comparison of the genomes of two Xanthomonas pathogens with differing host specificities.</title>
        <authorList>
            <person name="da Silva A.C.R."/>
            <person name="Ferro J.A."/>
            <person name="Reinach F.C."/>
            <person name="Farah C.S."/>
            <person name="Furlan L.R."/>
            <person name="Quaggio R.B."/>
            <person name="Monteiro-Vitorello C.B."/>
            <person name="Van Sluys M.A."/>
            <person name="Almeida N.F. Jr."/>
            <person name="Alves L.M.C."/>
            <person name="do Amaral A.M."/>
            <person name="Bertolini M.C."/>
            <person name="Camargo L.E.A."/>
            <person name="Camarotte G."/>
            <person name="Cannavan F."/>
            <person name="Cardozo J."/>
            <person name="Chambergo F."/>
            <person name="Ciapina L.P."/>
            <person name="Cicarelli R.M.B."/>
            <person name="Coutinho L.L."/>
            <person name="Cursino-Santos J.R."/>
            <person name="El-Dorry H."/>
            <person name="Faria J.B."/>
            <person name="Ferreira A.J.S."/>
            <person name="Ferreira R.C.C."/>
            <person name="Ferro M.I.T."/>
            <person name="Formighieri E.F."/>
            <person name="Franco M.C."/>
            <person name="Greggio C.C."/>
            <person name="Gruber A."/>
            <person name="Katsuyama A.M."/>
            <person name="Kishi L.T."/>
            <person name="Leite R.P."/>
            <person name="Lemos E.G.M."/>
            <person name="Lemos M.V.F."/>
            <person name="Locali E.C."/>
            <person name="Machado M.A."/>
            <person name="Madeira A.M.B.N."/>
            <person name="Martinez-Rossi N.M."/>
            <person name="Martins E.C."/>
            <person name="Meidanis J."/>
            <person name="Menck C.F.M."/>
            <person name="Miyaki C.Y."/>
            <person name="Moon D.H."/>
            <person name="Moreira L.M."/>
            <person name="Novo M.T.M."/>
            <person name="Okura V.K."/>
            <person name="Oliveira M.C."/>
            <person name="Oliveira V.R."/>
            <person name="Pereira H.A."/>
            <person name="Rossi A."/>
            <person name="Sena J.A.D."/>
            <person name="Silva C."/>
            <person name="de Souza R.F."/>
            <person name="Spinola L.A.F."/>
            <person name="Takita M.A."/>
            <person name="Tamura R.E."/>
            <person name="Teixeira E.C."/>
            <person name="Tezza R.I.D."/>
            <person name="Trindade dos Santos M."/>
            <person name="Truffi D."/>
            <person name="Tsai S.M."/>
            <person name="White F.F."/>
            <person name="Setubal J.C."/>
            <person name="Kitajima J.P."/>
        </authorList>
    </citation>
    <scope>NUCLEOTIDE SEQUENCE [LARGE SCALE GENOMIC DNA]</scope>
    <source>
        <strain>306</strain>
    </source>
</reference>
<comment type="function">
    <text evidence="1">Transport of potassium into the cell. Likely operates as a K(+):H(+) symporter.</text>
</comment>
<comment type="catalytic activity">
    <reaction evidence="1">
        <text>K(+)(in) + H(+)(in) = K(+)(out) + H(+)(out)</text>
        <dbReference type="Rhea" id="RHEA:28490"/>
        <dbReference type="ChEBI" id="CHEBI:15378"/>
        <dbReference type="ChEBI" id="CHEBI:29103"/>
    </reaction>
    <physiologicalReaction direction="right-to-left" evidence="1">
        <dbReference type="Rhea" id="RHEA:28492"/>
    </physiologicalReaction>
</comment>
<comment type="subcellular location">
    <subcellularLocation>
        <location evidence="1">Cell inner membrane</location>
        <topology evidence="1">Multi-pass membrane protein</topology>
    </subcellularLocation>
</comment>
<comment type="similarity">
    <text evidence="1">Belongs to the HAK/KUP transporter (TC 2.A.72) family.</text>
</comment>
<sequence length="634" mass="68950">MSHTPKSAGSSHAPVNSQTALVIGAIGVVFGDIGTSPLYTLKEAFSPHYGLTPDHDTVLGILSLVFWALMLVVTLKYVTAIMRADNDGEGGIMALTALAQRTLPGGSRSMYVVGILGIFGASLFFGDGVITPAISVLSAVEGLEVAAPKLEPFVVPITLVVLSMLFLAQRFGTERVGKAFGPITLLWFFALGAIGVYNMARAPEVLHALNPWWGVRFFAQHNWHAVFVLGAVVLAVTGGEALYADMGHFGAKAIRRSWQFVVLPMLTLTYLGQGALVLRNPAAVSNPFYEAVPEWALYPMIVLATAATVIASQALITGAYSVASQAMQLGYIPRMHIRHTSHSTIGQIYVPAVNWCLLALVAVAVIGFGDSASLATAYGVSVTGTMLITTVLMIIYARANPRVPAPLLWLFALVFLAVDCAFFYANIIKFLDGAWFPLLLGLILFTLMRTWRRGRKLLHDEIRKDGIKLDTFLPGLMLAPPVRVPGTAVFLTADPMVVPHALMHNLKHNKVLHERNVFLTVETLQVPYAAAGKRLKIDAIGDEFYRVHVRFGFMETPDVPLALMRSCDQGGIYFDPMDTTYFASRETIVASANRGMPIWRDKLFALMHRNAAPATGFFRIPGNRLVELGAQVEI</sequence>
<accession>Q8PHV1</accession>
<gene>
    <name evidence="1" type="primary">kup</name>
    <name type="ordered locus">XAC3148</name>
</gene>
<evidence type="ECO:0000255" key="1">
    <source>
        <dbReference type="HAMAP-Rule" id="MF_01522"/>
    </source>
</evidence>